<protein>
    <recommendedName>
        <fullName evidence="1">Phosphate import ATP-binding protein PstB</fullName>
        <ecNumber evidence="1">7.3.2.1</ecNumber>
    </recommendedName>
    <alternativeName>
        <fullName evidence="1">ABC phosphate transporter</fullName>
    </alternativeName>
    <alternativeName>
        <fullName evidence="1">Phosphate-transporting ATPase</fullName>
    </alternativeName>
</protein>
<organism>
    <name type="scientific">Mycoplasmoides gallisepticum (strain R(low / passage 15 / clone 2))</name>
    <name type="common">Mycoplasma gallisepticum</name>
    <dbReference type="NCBI Taxonomy" id="710127"/>
    <lineage>
        <taxon>Bacteria</taxon>
        <taxon>Bacillati</taxon>
        <taxon>Mycoplasmatota</taxon>
        <taxon>Mycoplasmoidales</taxon>
        <taxon>Mycoplasmoidaceae</taxon>
        <taxon>Mycoplasmoides</taxon>
    </lineage>
</organism>
<reference key="1">
    <citation type="journal article" date="2003" name="Microbiology">
        <title>The complete genome sequence of the avian pathogen Mycoplasma gallisepticum strain R(low).</title>
        <authorList>
            <person name="Papazisi L."/>
            <person name="Gorton T.S."/>
            <person name="Kutish G."/>
            <person name="Markham P.F."/>
            <person name="Browning G.F."/>
            <person name="Nguyen D.K."/>
            <person name="Swartzell S."/>
            <person name="Madan A."/>
            <person name="Mahairas G."/>
            <person name="Geary S.J."/>
        </authorList>
    </citation>
    <scope>NUCLEOTIDE SEQUENCE [LARGE SCALE GENOMIC DNA]</scope>
    <source>
        <strain>R(low / passage 15 / clone 2)</strain>
    </source>
</reference>
<proteinExistence type="inferred from homology"/>
<keyword id="KW-0067">ATP-binding</keyword>
<keyword id="KW-1003">Cell membrane</keyword>
<keyword id="KW-0472">Membrane</keyword>
<keyword id="KW-0547">Nucleotide-binding</keyword>
<keyword id="KW-0592">Phosphate transport</keyword>
<keyword id="KW-1185">Reference proteome</keyword>
<keyword id="KW-1278">Translocase</keyword>
<keyword id="KW-0813">Transport</keyword>
<feature type="chain" id="PRO_0000092839" description="Phosphate import ATP-binding protein PstB">
    <location>
        <begin position="1"/>
        <end position="325"/>
    </location>
</feature>
<feature type="domain" description="ABC transporter" evidence="1">
    <location>
        <begin position="79"/>
        <end position="320"/>
    </location>
</feature>
<feature type="binding site" evidence="1">
    <location>
        <begin position="111"/>
        <end position="118"/>
    </location>
    <ligand>
        <name>ATP</name>
        <dbReference type="ChEBI" id="CHEBI:30616"/>
    </ligand>
</feature>
<accession>Q7NC40</accession>
<gene>
    <name evidence="1" type="primary">pstB</name>
    <name type="ordered locus">MYCGA0410</name>
    <name type="ORF">MGA_0693</name>
</gene>
<sequence>MHKKIDPQTKELYLQKKGEYKEKIKELVQKKKELLSTDNKDELIKINEKIKRYKILYKNKDPNLIHFKDDYNFDNIFEIDNYNLWYSNKAKHALKDINLGIKKNKVTALIGPSGCGKSTFIRSLNRMHDLTDGVSKTGSIFFLSKNIYSKTLPELELRSKVGMVFQKPTPFSLSIYENIAYALKSHGIKDKIKIDQIVKESLEGAALWDDVKDILFQSAHGLSGGQQQRLSIARAIALKPEVLLMDEPTSALDPIATNKIEQLIHQLKKSYSIVIVTHSMAQAQRVSDETVFFYEGRVLEHGTTKQIFTQPNNEKTKDYIDGRIG</sequence>
<name>PSTB_MYCGA</name>
<dbReference type="EC" id="7.3.2.1" evidence="1"/>
<dbReference type="EMBL" id="AE015450">
    <property type="protein sequence ID" value="AAP56391.2"/>
    <property type="molecule type" value="Genomic_DNA"/>
</dbReference>
<dbReference type="RefSeq" id="WP_011113270.1">
    <property type="nucleotide sequence ID" value="NC_004829.2"/>
</dbReference>
<dbReference type="SMR" id="Q7NC40"/>
<dbReference type="KEGG" id="mga:MGA_0693"/>
<dbReference type="HOGENOM" id="CLU_000604_1_22_14"/>
<dbReference type="OrthoDB" id="9802185at2"/>
<dbReference type="Proteomes" id="UP000001418">
    <property type="component" value="Chromosome"/>
</dbReference>
<dbReference type="GO" id="GO:0005886">
    <property type="term" value="C:plasma membrane"/>
    <property type="evidence" value="ECO:0007669"/>
    <property type="project" value="UniProtKB-SubCell"/>
</dbReference>
<dbReference type="GO" id="GO:0005524">
    <property type="term" value="F:ATP binding"/>
    <property type="evidence" value="ECO:0007669"/>
    <property type="project" value="UniProtKB-KW"/>
</dbReference>
<dbReference type="GO" id="GO:0016887">
    <property type="term" value="F:ATP hydrolysis activity"/>
    <property type="evidence" value="ECO:0007669"/>
    <property type="project" value="InterPro"/>
</dbReference>
<dbReference type="GO" id="GO:0015415">
    <property type="term" value="F:ATPase-coupled phosphate ion transmembrane transporter activity"/>
    <property type="evidence" value="ECO:0007669"/>
    <property type="project" value="UniProtKB-EC"/>
</dbReference>
<dbReference type="GO" id="GO:0035435">
    <property type="term" value="P:phosphate ion transmembrane transport"/>
    <property type="evidence" value="ECO:0007669"/>
    <property type="project" value="InterPro"/>
</dbReference>
<dbReference type="CDD" id="cd03260">
    <property type="entry name" value="ABC_PstB_phosphate_transporter"/>
    <property type="match status" value="1"/>
</dbReference>
<dbReference type="Gene3D" id="3.40.50.300">
    <property type="entry name" value="P-loop containing nucleotide triphosphate hydrolases"/>
    <property type="match status" value="1"/>
</dbReference>
<dbReference type="InterPro" id="IPR003593">
    <property type="entry name" value="AAA+_ATPase"/>
</dbReference>
<dbReference type="InterPro" id="IPR003439">
    <property type="entry name" value="ABC_transporter-like_ATP-bd"/>
</dbReference>
<dbReference type="InterPro" id="IPR017871">
    <property type="entry name" value="ABC_transporter-like_CS"/>
</dbReference>
<dbReference type="InterPro" id="IPR027417">
    <property type="entry name" value="P-loop_NTPase"/>
</dbReference>
<dbReference type="InterPro" id="IPR005670">
    <property type="entry name" value="PstB-like"/>
</dbReference>
<dbReference type="NCBIfam" id="TIGR00972">
    <property type="entry name" value="3a0107s01c2"/>
    <property type="match status" value="1"/>
</dbReference>
<dbReference type="PANTHER" id="PTHR43423">
    <property type="entry name" value="ABC TRANSPORTER I FAMILY MEMBER 17"/>
    <property type="match status" value="1"/>
</dbReference>
<dbReference type="PANTHER" id="PTHR43423:SF1">
    <property type="entry name" value="ABC TRANSPORTER I FAMILY MEMBER 17"/>
    <property type="match status" value="1"/>
</dbReference>
<dbReference type="Pfam" id="PF00005">
    <property type="entry name" value="ABC_tran"/>
    <property type="match status" value="1"/>
</dbReference>
<dbReference type="SMART" id="SM00382">
    <property type="entry name" value="AAA"/>
    <property type="match status" value="1"/>
</dbReference>
<dbReference type="SUPFAM" id="SSF52540">
    <property type="entry name" value="P-loop containing nucleoside triphosphate hydrolases"/>
    <property type="match status" value="1"/>
</dbReference>
<dbReference type="PROSITE" id="PS00211">
    <property type="entry name" value="ABC_TRANSPORTER_1"/>
    <property type="match status" value="1"/>
</dbReference>
<dbReference type="PROSITE" id="PS50893">
    <property type="entry name" value="ABC_TRANSPORTER_2"/>
    <property type="match status" value="1"/>
</dbReference>
<dbReference type="PROSITE" id="PS51238">
    <property type="entry name" value="PSTB"/>
    <property type="match status" value="1"/>
</dbReference>
<evidence type="ECO:0000255" key="1">
    <source>
        <dbReference type="HAMAP-Rule" id="MF_01702"/>
    </source>
</evidence>
<comment type="function">
    <text evidence="1">Part of the ABC transporter complex PstSACB involved in phosphate import. Responsible for energy coupling to the transport system.</text>
</comment>
<comment type="catalytic activity">
    <reaction evidence="1">
        <text>phosphate(out) + ATP + H2O = ADP + 2 phosphate(in) + H(+)</text>
        <dbReference type="Rhea" id="RHEA:24440"/>
        <dbReference type="ChEBI" id="CHEBI:15377"/>
        <dbReference type="ChEBI" id="CHEBI:15378"/>
        <dbReference type="ChEBI" id="CHEBI:30616"/>
        <dbReference type="ChEBI" id="CHEBI:43474"/>
        <dbReference type="ChEBI" id="CHEBI:456216"/>
        <dbReference type="EC" id="7.3.2.1"/>
    </reaction>
</comment>
<comment type="subunit">
    <text evidence="1">The complex is composed of two ATP-binding proteins (PstB), two transmembrane proteins (PstC and PstA) and a solute-binding protein (PstS).</text>
</comment>
<comment type="subcellular location">
    <subcellularLocation>
        <location evidence="1">Cell membrane</location>
        <topology evidence="1">Peripheral membrane protein</topology>
    </subcellularLocation>
</comment>
<comment type="similarity">
    <text evidence="1">Belongs to the ABC transporter superfamily. Phosphate importer (TC 3.A.1.7) family.</text>
</comment>